<feature type="chain" id="PRO_0000276351" description="Large ribosomal subunit protein uL14c">
    <location>
        <begin position="1"/>
        <end position="122"/>
    </location>
</feature>
<reference key="1">
    <citation type="journal article" date="2006" name="BMC Evol. Biol.">
        <title>Complete plastid genome sequences of Drimys, Liriodendron, and Piper: implications for the phylogenetic relationships of magnoliids.</title>
        <authorList>
            <person name="Cai Z."/>
            <person name="Penaflor C."/>
            <person name="Kuehl J.V."/>
            <person name="Leebens-Mack J."/>
            <person name="Carlson J.E."/>
            <person name="dePamphilis C.W."/>
            <person name="Boore J.L."/>
            <person name="Jansen R.K."/>
        </authorList>
    </citation>
    <scope>NUCLEOTIDE SEQUENCE [LARGE SCALE GENOMIC DNA]</scope>
</reference>
<gene>
    <name evidence="1" type="primary">rpl14</name>
</gene>
<comment type="function">
    <text evidence="1">Binds to 23S rRNA.</text>
</comment>
<comment type="subunit">
    <text evidence="1">Part of the 50S ribosomal subunit.</text>
</comment>
<comment type="subcellular location">
    <subcellularLocation>
        <location>Plastid</location>
        <location>Chloroplast</location>
    </subcellularLocation>
</comment>
<comment type="similarity">
    <text evidence="1">Belongs to the universal ribosomal protein uL14 family.</text>
</comment>
<dbReference type="EMBL" id="DQ899947">
    <property type="protein sequence ID" value="ABI32546.1"/>
    <property type="molecule type" value="Genomic_DNA"/>
</dbReference>
<dbReference type="RefSeq" id="YP_740239.1">
    <property type="nucleotide sequence ID" value="NC_008326.1"/>
</dbReference>
<dbReference type="SMR" id="Q0G9I2"/>
<dbReference type="GeneID" id="4266663"/>
<dbReference type="GO" id="GO:0009507">
    <property type="term" value="C:chloroplast"/>
    <property type="evidence" value="ECO:0007669"/>
    <property type="project" value="UniProtKB-SubCell"/>
</dbReference>
<dbReference type="GO" id="GO:0022625">
    <property type="term" value="C:cytosolic large ribosomal subunit"/>
    <property type="evidence" value="ECO:0007669"/>
    <property type="project" value="TreeGrafter"/>
</dbReference>
<dbReference type="GO" id="GO:0070180">
    <property type="term" value="F:large ribosomal subunit rRNA binding"/>
    <property type="evidence" value="ECO:0007669"/>
    <property type="project" value="TreeGrafter"/>
</dbReference>
<dbReference type="GO" id="GO:0003735">
    <property type="term" value="F:structural constituent of ribosome"/>
    <property type="evidence" value="ECO:0007669"/>
    <property type="project" value="InterPro"/>
</dbReference>
<dbReference type="GO" id="GO:0006412">
    <property type="term" value="P:translation"/>
    <property type="evidence" value="ECO:0007669"/>
    <property type="project" value="UniProtKB-UniRule"/>
</dbReference>
<dbReference type="CDD" id="cd00337">
    <property type="entry name" value="Ribosomal_uL14"/>
    <property type="match status" value="1"/>
</dbReference>
<dbReference type="FunFam" id="2.40.150.20:FF:000002">
    <property type="entry name" value="50S ribosomal protein L14, chloroplastic"/>
    <property type="match status" value="1"/>
</dbReference>
<dbReference type="Gene3D" id="2.40.150.20">
    <property type="entry name" value="Ribosomal protein L14"/>
    <property type="match status" value="1"/>
</dbReference>
<dbReference type="HAMAP" id="MF_01367">
    <property type="entry name" value="Ribosomal_uL14"/>
    <property type="match status" value="1"/>
</dbReference>
<dbReference type="InterPro" id="IPR000218">
    <property type="entry name" value="Ribosomal_uL14"/>
</dbReference>
<dbReference type="InterPro" id="IPR005745">
    <property type="entry name" value="Ribosomal_uL14_bac-type"/>
</dbReference>
<dbReference type="InterPro" id="IPR019972">
    <property type="entry name" value="Ribosomal_uL14_CS"/>
</dbReference>
<dbReference type="InterPro" id="IPR036853">
    <property type="entry name" value="Ribosomal_uL14_sf"/>
</dbReference>
<dbReference type="NCBIfam" id="TIGR01067">
    <property type="entry name" value="rplN_bact"/>
    <property type="match status" value="1"/>
</dbReference>
<dbReference type="PANTHER" id="PTHR11761">
    <property type="entry name" value="50S/60S RIBOSOMAL PROTEIN L14/L23"/>
    <property type="match status" value="1"/>
</dbReference>
<dbReference type="PANTHER" id="PTHR11761:SF3">
    <property type="entry name" value="LARGE RIBOSOMAL SUBUNIT PROTEIN UL14M"/>
    <property type="match status" value="1"/>
</dbReference>
<dbReference type="Pfam" id="PF00238">
    <property type="entry name" value="Ribosomal_L14"/>
    <property type="match status" value="1"/>
</dbReference>
<dbReference type="SMART" id="SM01374">
    <property type="entry name" value="Ribosomal_L14"/>
    <property type="match status" value="1"/>
</dbReference>
<dbReference type="SUPFAM" id="SSF50193">
    <property type="entry name" value="Ribosomal protein L14"/>
    <property type="match status" value="1"/>
</dbReference>
<dbReference type="PROSITE" id="PS00049">
    <property type="entry name" value="RIBOSOMAL_L14"/>
    <property type="match status" value="1"/>
</dbReference>
<geneLocation type="chloroplast"/>
<organism>
    <name type="scientific">Liriodendron tulipifera</name>
    <name type="common">Tuliptree</name>
    <name type="synonym">Tulip poplar</name>
    <dbReference type="NCBI Taxonomy" id="3415"/>
    <lineage>
        <taxon>Eukaryota</taxon>
        <taxon>Viridiplantae</taxon>
        <taxon>Streptophyta</taxon>
        <taxon>Embryophyta</taxon>
        <taxon>Tracheophyta</taxon>
        <taxon>Spermatophyta</taxon>
        <taxon>Magnoliopsida</taxon>
        <taxon>Magnoliidae</taxon>
        <taxon>Magnoliales</taxon>
        <taxon>Magnoliaceae</taxon>
        <taxon>Liriodendron</taxon>
    </lineage>
</organism>
<sequence length="122" mass="13586">MIQPQTHLNVADNSGARELMCIRIIGASNHRYAHIGDVIVAVIKEAVPNMPLERSEVIRAVIVRTCKELRRDNGMIIRYDDNAAVVIDQEGNPKGTRVFGAIARELRQLNFTKIVSLAPEVL</sequence>
<name>RK14_LIRTU</name>
<evidence type="ECO:0000255" key="1">
    <source>
        <dbReference type="HAMAP-Rule" id="MF_01367"/>
    </source>
</evidence>
<evidence type="ECO:0000305" key="2"/>
<protein>
    <recommendedName>
        <fullName evidence="1">Large ribosomal subunit protein uL14c</fullName>
    </recommendedName>
    <alternativeName>
        <fullName evidence="2">50S ribosomal protein L14, chloroplastic</fullName>
    </alternativeName>
</protein>
<keyword id="KW-0150">Chloroplast</keyword>
<keyword id="KW-0934">Plastid</keyword>
<keyword id="KW-0687">Ribonucleoprotein</keyword>
<keyword id="KW-0689">Ribosomal protein</keyword>
<keyword id="KW-0694">RNA-binding</keyword>
<keyword id="KW-0699">rRNA-binding</keyword>
<proteinExistence type="inferred from homology"/>
<accession>Q0G9I2</accession>